<proteinExistence type="evidence at transcript level"/>
<gene>
    <name type="primary">NTF3</name>
</gene>
<dbReference type="EMBL" id="M83378">
    <property type="protein sequence ID" value="AAA68880.1"/>
    <property type="molecule type" value="Genomic_DNA"/>
</dbReference>
<dbReference type="EMBL" id="Z30092">
    <property type="protein sequence ID" value="CAA82908.1"/>
    <property type="molecule type" value="Genomic_DNA"/>
</dbReference>
<dbReference type="PIR" id="I50400">
    <property type="entry name" value="I50400"/>
</dbReference>
<dbReference type="RefSeq" id="NP_001026659.1">
    <property type="nucleotide sequence ID" value="NM_001031488.2"/>
</dbReference>
<dbReference type="RefSeq" id="XP_040557515.1">
    <property type="nucleotide sequence ID" value="XM_040701581.2"/>
</dbReference>
<dbReference type="RefSeq" id="XP_046764548.1">
    <property type="nucleotide sequence ID" value="XM_046908592.1"/>
</dbReference>
<dbReference type="SMR" id="P25433"/>
<dbReference type="FunCoup" id="P25433">
    <property type="interactions" value="185"/>
</dbReference>
<dbReference type="STRING" id="9031.ENSGALP00000070337"/>
<dbReference type="GlyCosmos" id="P25433">
    <property type="glycosylation" value="1 site, No reported glycans"/>
</dbReference>
<dbReference type="GlyGen" id="P25433">
    <property type="glycosylation" value="1 site"/>
</dbReference>
<dbReference type="PaxDb" id="9031-ENSGALP00000043385"/>
<dbReference type="Ensembl" id="ENSGALT00000102553">
    <property type="protein sequence ID" value="ENSGALP00000070337"/>
    <property type="gene ID" value="ENSGALG00000053526"/>
</dbReference>
<dbReference type="Ensembl" id="ENSGALT00000115302">
    <property type="protein sequence ID" value="ENSGALP00000080861"/>
    <property type="gene ID" value="ENSGALG00000053526"/>
</dbReference>
<dbReference type="Ensembl" id="ENSGALT00000123388">
    <property type="protein sequence ID" value="ENSGALP00000090007"/>
    <property type="gene ID" value="ENSGALG00000053526"/>
</dbReference>
<dbReference type="Ensembl" id="ENSGALT00000137077">
    <property type="protein sequence ID" value="ENSGALP00000080249"/>
    <property type="gene ID" value="ENSGALG00000053526"/>
</dbReference>
<dbReference type="Ensembl" id="ENSGALT00000137450">
    <property type="protein sequence ID" value="ENSGALP00000086099"/>
    <property type="gene ID" value="ENSGALG00000053526"/>
</dbReference>
<dbReference type="Ensembl" id="ENSGALT00000140381">
    <property type="protein sequence ID" value="ENSGALP00000075559"/>
    <property type="gene ID" value="ENSGALG00000053526"/>
</dbReference>
<dbReference type="Ensembl" id="ENSGALT00000145519">
    <property type="protein sequence ID" value="ENSGALP00000085846"/>
    <property type="gene ID" value="ENSGALG00000053526"/>
</dbReference>
<dbReference type="Ensembl" id="ENSGALT00000153590">
    <property type="protein sequence ID" value="ENSGALP00000092306"/>
    <property type="gene ID" value="ENSGALG00000053526"/>
</dbReference>
<dbReference type="Ensembl" id="ENSGALT00000153768">
    <property type="protein sequence ID" value="ENSGALP00000089138"/>
    <property type="gene ID" value="ENSGALG00000053526"/>
</dbReference>
<dbReference type="Ensembl" id="ENSGALT00010059737.1">
    <property type="protein sequence ID" value="ENSGALP00010036497.1"/>
    <property type="gene ID" value="ENSGALG00010024492.1"/>
</dbReference>
<dbReference type="Ensembl" id="ENSGALT00010059739.1">
    <property type="protein sequence ID" value="ENSGALP00010036499.1"/>
    <property type="gene ID" value="ENSGALG00010024492.1"/>
</dbReference>
<dbReference type="Ensembl" id="ENSGALT00010059745.1">
    <property type="protein sequence ID" value="ENSGALP00010036505.1"/>
    <property type="gene ID" value="ENSGALG00010024492.1"/>
</dbReference>
<dbReference type="Ensembl" id="ENSGALT00010059749.1">
    <property type="protein sequence ID" value="ENSGALP00010036509.1"/>
    <property type="gene ID" value="ENSGALG00010024492.1"/>
</dbReference>
<dbReference type="Ensembl" id="ENSGALT00010059755.1">
    <property type="protein sequence ID" value="ENSGALP00010036515.1"/>
    <property type="gene ID" value="ENSGALG00010024492.1"/>
</dbReference>
<dbReference type="Ensembl" id="ENSGALT00010059756.1">
    <property type="protein sequence ID" value="ENSGALP00010036516.1"/>
    <property type="gene ID" value="ENSGALG00010024492.1"/>
</dbReference>
<dbReference type="Ensembl" id="ENSGALT00010059757.1">
    <property type="protein sequence ID" value="ENSGALP00010036517.1"/>
    <property type="gene ID" value="ENSGALG00010024492.1"/>
</dbReference>
<dbReference type="Ensembl" id="ENSGALT00010059758.1">
    <property type="protein sequence ID" value="ENSGALP00010036518.1"/>
    <property type="gene ID" value="ENSGALG00010024492.1"/>
</dbReference>
<dbReference type="GeneID" id="428099"/>
<dbReference type="KEGG" id="gga:428099"/>
<dbReference type="CTD" id="4908"/>
<dbReference type="VEuPathDB" id="HostDB:geneid_428099"/>
<dbReference type="eggNOG" id="ENOG502R4FK">
    <property type="taxonomic scope" value="Eukaryota"/>
</dbReference>
<dbReference type="GeneTree" id="ENSGT00390000007725"/>
<dbReference type="HOGENOM" id="CLU_059942_1_1_1"/>
<dbReference type="InParanoid" id="P25433"/>
<dbReference type="OMA" id="FQPMIAM"/>
<dbReference type="OrthoDB" id="6491780at2759"/>
<dbReference type="PhylomeDB" id="P25433"/>
<dbReference type="TreeFam" id="TF106463"/>
<dbReference type="PRO" id="PR:P25433"/>
<dbReference type="Proteomes" id="UP000000539">
    <property type="component" value="Chromosome 1"/>
</dbReference>
<dbReference type="GO" id="GO:0005576">
    <property type="term" value="C:extracellular region"/>
    <property type="evidence" value="ECO:0007669"/>
    <property type="project" value="UniProtKB-SubCell"/>
</dbReference>
<dbReference type="GO" id="GO:0008083">
    <property type="term" value="F:growth factor activity"/>
    <property type="evidence" value="ECO:0007669"/>
    <property type="project" value="UniProtKB-KW"/>
</dbReference>
<dbReference type="GO" id="GO:0005165">
    <property type="term" value="F:neurotrophin receptor binding"/>
    <property type="evidence" value="ECO:0007669"/>
    <property type="project" value="InterPro"/>
</dbReference>
<dbReference type="FunFam" id="2.10.90.10:FF:000002">
    <property type="entry name" value="Brain-derived neurotrophic factor"/>
    <property type="match status" value="1"/>
</dbReference>
<dbReference type="Gene3D" id="2.10.90.10">
    <property type="entry name" value="Cystine-knot cytokines"/>
    <property type="match status" value="1"/>
</dbReference>
<dbReference type="InterPro" id="IPR029034">
    <property type="entry name" value="Cystine-knot_cytokine"/>
</dbReference>
<dbReference type="InterPro" id="IPR020408">
    <property type="entry name" value="Nerve_growth_factor-like"/>
</dbReference>
<dbReference type="InterPro" id="IPR002072">
    <property type="entry name" value="Nerve_growth_factor-rel"/>
</dbReference>
<dbReference type="InterPro" id="IPR019846">
    <property type="entry name" value="Nerve_growth_factor_CS"/>
</dbReference>
<dbReference type="InterPro" id="IPR015578">
    <property type="entry name" value="Neurotrophin-3"/>
</dbReference>
<dbReference type="InterPro" id="IPR045815">
    <property type="entry name" value="NTF3_N"/>
</dbReference>
<dbReference type="PANTHER" id="PTHR11589">
    <property type="entry name" value="NERVE GROWTH FACTOR NGF -RELATED"/>
    <property type="match status" value="1"/>
</dbReference>
<dbReference type="PANTHER" id="PTHR11589:SF4">
    <property type="entry name" value="NEUROTROPHIN-3"/>
    <property type="match status" value="1"/>
</dbReference>
<dbReference type="Pfam" id="PF00243">
    <property type="entry name" value="NGF"/>
    <property type="match status" value="1"/>
</dbReference>
<dbReference type="Pfam" id="PF19338">
    <property type="entry name" value="NTF3_N"/>
    <property type="match status" value="1"/>
</dbReference>
<dbReference type="PIRSF" id="PIRSF001789">
    <property type="entry name" value="NGF"/>
    <property type="match status" value="1"/>
</dbReference>
<dbReference type="PRINTS" id="PR01914">
    <property type="entry name" value="NEUROTROPHN3"/>
</dbReference>
<dbReference type="PRINTS" id="PR00268">
    <property type="entry name" value="NGF"/>
</dbReference>
<dbReference type="SMART" id="SM00140">
    <property type="entry name" value="NGF"/>
    <property type="match status" value="1"/>
</dbReference>
<dbReference type="SUPFAM" id="SSF57501">
    <property type="entry name" value="Cystine-knot cytokines"/>
    <property type="match status" value="1"/>
</dbReference>
<dbReference type="PROSITE" id="PS00248">
    <property type="entry name" value="NGF_1"/>
    <property type="match status" value="1"/>
</dbReference>
<dbReference type="PROSITE" id="PS50270">
    <property type="entry name" value="NGF_2"/>
    <property type="match status" value="1"/>
</dbReference>
<keyword id="KW-0165">Cleavage on pair of basic residues</keyword>
<keyword id="KW-1015">Disulfide bond</keyword>
<keyword id="KW-0325">Glycoprotein</keyword>
<keyword id="KW-0339">Growth factor</keyword>
<keyword id="KW-1185">Reference proteome</keyword>
<keyword id="KW-0964">Secreted</keyword>
<keyword id="KW-0732">Signal</keyword>
<sequence>MSILFYVIFLAYLRGIQSTNMDQRSLPEDSMNSLIIKLIRADILKNKLSKQVMDVKENYQNIVQKVEDHQEMDGDENVKSDFQPVISMDTDLLRQQRRYNSPRVLLSDNTPLEPPPLYLTEDYVGSSVVLNRTSRRKRYAEHKSHRGEYSVCDSESLWVTDKSSAIDIRGHQVTVLGEIKTGNSPVKQYFYETRCKEAKPVKNGCRGIDDKHWNSQCKTSQTYVRALTSENNKLVGWRWIRIDTSCVCALSRKIGRT</sequence>
<evidence type="ECO:0000250" key="1"/>
<evidence type="ECO:0000255" key="2"/>
<evidence type="ECO:0000305" key="3"/>
<accession>P25433</accession>
<accession>Q6LAC6</accession>
<organism>
    <name type="scientific">Gallus gallus</name>
    <name type="common">Chicken</name>
    <dbReference type="NCBI Taxonomy" id="9031"/>
    <lineage>
        <taxon>Eukaryota</taxon>
        <taxon>Metazoa</taxon>
        <taxon>Chordata</taxon>
        <taxon>Craniata</taxon>
        <taxon>Vertebrata</taxon>
        <taxon>Euteleostomi</taxon>
        <taxon>Archelosauria</taxon>
        <taxon>Archosauria</taxon>
        <taxon>Dinosauria</taxon>
        <taxon>Saurischia</taxon>
        <taxon>Theropoda</taxon>
        <taxon>Coelurosauria</taxon>
        <taxon>Aves</taxon>
        <taxon>Neognathae</taxon>
        <taxon>Galloanserae</taxon>
        <taxon>Galliformes</taxon>
        <taxon>Phasianidae</taxon>
        <taxon>Phasianinae</taxon>
        <taxon>Gallus</taxon>
    </lineage>
</organism>
<protein>
    <recommendedName>
        <fullName>Neurotrophin-3</fullName>
        <shortName>NT-3</shortName>
    </recommendedName>
    <alternativeName>
        <fullName>HDNF</fullName>
    </alternativeName>
    <alternativeName>
        <fullName>Nerve growth factor 2</fullName>
        <shortName>NGF-2</shortName>
    </alternativeName>
    <alternativeName>
        <fullName>Neurotrophic factor</fullName>
    </alternativeName>
</protein>
<feature type="signal peptide" evidence="2">
    <location>
        <begin position="1"/>
        <end position="18"/>
    </location>
</feature>
<feature type="propeptide" id="PRO_0000019665">
    <location>
        <begin position="19"/>
        <end position="138"/>
    </location>
</feature>
<feature type="chain" id="PRO_0000019666" description="Neurotrophin-3">
    <location>
        <begin position="139"/>
        <end position="257"/>
    </location>
</feature>
<feature type="glycosylation site" description="N-linked (GlcNAc...) asparagine" evidence="2">
    <location>
        <position position="131"/>
    </location>
</feature>
<feature type="disulfide bond" evidence="1">
    <location>
        <begin position="152"/>
        <end position="217"/>
    </location>
</feature>
<feature type="disulfide bond" evidence="1">
    <location>
        <begin position="195"/>
        <end position="246"/>
    </location>
</feature>
<feature type="disulfide bond" evidence="1">
    <location>
        <begin position="205"/>
        <end position="248"/>
    </location>
</feature>
<reference key="1">
    <citation type="journal article" date="1992" name="DNA Seq.">
        <title>Gene sequences of chicken BDNF and NT-3.</title>
        <authorList>
            <person name="Maisonpierre P."/>
            <person name="Belluscio L."/>
            <person name="Conover J.C."/>
            <person name="Yancopoulos G.D."/>
        </authorList>
    </citation>
    <scope>NUCLEOTIDE SEQUENCE [GENOMIC DNA]</scope>
</reference>
<reference key="2">
    <citation type="journal article" date="1993" name="Eur. J. Neurosci.">
        <title>Cellular localization of brain-derived neurotrophic factor and neurotrophin-3 mRNA expression in the early chicken embryo.</title>
        <authorList>
            <person name="Hallboeoek F."/>
            <person name="Ibanez C.F."/>
            <person name="Ebendal T."/>
            <person name="Persson H."/>
        </authorList>
    </citation>
    <scope>NUCLEOTIDE SEQUENCE [GENOMIC DNA] OF 32-257</scope>
</reference>
<reference key="3">
    <citation type="journal article" date="1991" name="Neuron">
        <title>Evolutionary studies of the nerve growth factor family reveal a novel member abundantly expressed in Xenopus ovary.</title>
        <authorList>
            <person name="Hallboeoek F."/>
            <person name="Ibanez C.F."/>
            <person name="Persson H."/>
        </authorList>
    </citation>
    <scope>NUCLEOTIDE SEQUENCE [GENOMIC DNA] OF 194-236</scope>
</reference>
<comment type="function">
    <text>Seems to promote the survival of visceral and proprioceptive sensory neurons.</text>
</comment>
<comment type="subcellular location">
    <subcellularLocation>
        <location>Secreted</location>
    </subcellularLocation>
</comment>
<comment type="tissue specificity">
    <text>In the embryo, the expression peak at E4.5 and decreases at later stages of development.</text>
</comment>
<comment type="similarity">
    <text evidence="3">Belongs to the NGF-beta family.</text>
</comment>
<name>NTF3_CHICK</name>